<comment type="function">
    <text evidence="1">Involved in the glycolate utilization. Catalyzes the condensation and subsequent hydrolysis of acetyl-coenzyme A (acetyl-CoA) and glyoxylate to form malate and CoA.</text>
</comment>
<comment type="catalytic activity">
    <reaction evidence="1">
        <text>glyoxylate + acetyl-CoA + H2O = (S)-malate + CoA + H(+)</text>
        <dbReference type="Rhea" id="RHEA:18181"/>
        <dbReference type="ChEBI" id="CHEBI:15377"/>
        <dbReference type="ChEBI" id="CHEBI:15378"/>
        <dbReference type="ChEBI" id="CHEBI:15589"/>
        <dbReference type="ChEBI" id="CHEBI:36655"/>
        <dbReference type="ChEBI" id="CHEBI:57287"/>
        <dbReference type="ChEBI" id="CHEBI:57288"/>
        <dbReference type="EC" id="2.3.3.9"/>
    </reaction>
</comment>
<comment type="cofactor">
    <cofactor evidence="1">
        <name>Mg(2+)</name>
        <dbReference type="ChEBI" id="CHEBI:18420"/>
    </cofactor>
</comment>
<comment type="pathway">
    <text evidence="1">Carbohydrate metabolism; glyoxylate cycle; (S)-malate from isocitrate: step 2/2.</text>
</comment>
<comment type="subunit">
    <text evidence="1">Monomer.</text>
</comment>
<comment type="subcellular location">
    <subcellularLocation>
        <location evidence="1">Cytoplasm</location>
    </subcellularLocation>
</comment>
<comment type="similarity">
    <text evidence="1">Belongs to the malate synthase family. GlcB subfamily.</text>
</comment>
<evidence type="ECO:0000255" key="1">
    <source>
        <dbReference type="HAMAP-Rule" id="MF_00641"/>
    </source>
</evidence>
<dbReference type="EC" id="2.3.3.9" evidence="1"/>
<dbReference type="EMBL" id="AP008957">
    <property type="protein sequence ID" value="BAH33925.1"/>
    <property type="molecule type" value="Genomic_DNA"/>
</dbReference>
<dbReference type="RefSeq" id="WP_020907832.1">
    <property type="nucleotide sequence ID" value="NC_012490.1"/>
</dbReference>
<dbReference type="SMR" id="C0ZZZ0"/>
<dbReference type="KEGG" id="rer:RER_32170"/>
<dbReference type="PATRIC" id="fig|234621.6.peg.3723"/>
<dbReference type="eggNOG" id="COG2225">
    <property type="taxonomic scope" value="Bacteria"/>
</dbReference>
<dbReference type="HOGENOM" id="CLU_028446_1_0_11"/>
<dbReference type="UniPathway" id="UPA00703">
    <property type="reaction ID" value="UER00720"/>
</dbReference>
<dbReference type="Proteomes" id="UP000002204">
    <property type="component" value="Chromosome"/>
</dbReference>
<dbReference type="GO" id="GO:0005829">
    <property type="term" value="C:cytosol"/>
    <property type="evidence" value="ECO:0007669"/>
    <property type="project" value="TreeGrafter"/>
</dbReference>
<dbReference type="GO" id="GO:0000287">
    <property type="term" value="F:magnesium ion binding"/>
    <property type="evidence" value="ECO:0007669"/>
    <property type="project" value="TreeGrafter"/>
</dbReference>
<dbReference type="GO" id="GO:0004474">
    <property type="term" value="F:malate synthase activity"/>
    <property type="evidence" value="ECO:0007669"/>
    <property type="project" value="UniProtKB-UniRule"/>
</dbReference>
<dbReference type="GO" id="GO:0009436">
    <property type="term" value="P:glyoxylate catabolic process"/>
    <property type="evidence" value="ECO:0007669"/>
    <property type="project" value="TreeGrafter"/>
</dbReference>
<dbReference type="GO" id="GO:0006097">
    <property type="term" value="P:glyoxylate cycle"/>
    <property type="evidence" value="ECO:0007669"/>
    <property type="project" value="UniProtKB-UniRule"/>
</dbReference>
<dbReference type="GO" id="GO:0006099">
    <property type="term" value="P:tricarboxylic acid cycle"/>
    <property type="evidence" value="ECO:0007669"/>
    <property type="project" value="UniProtKB-KW"/>
</dbReference>
<dbReference type="FunFam" id="3.20.20.360:FF:000002">
    <property type="entry name" value="Malate synthase G"/>
    <property type="match status" value="1"/>
</dbReference>
<dbReference type="Gene3D" id="3.20.20.360">
    <property type="entry name" value="Malate synthase, domain 3"/>
    <property type="match status" value="2"/>
</dbReference>
<dbReference type="Gene3D" id="1.20.1220.12">
    <property type="entry name" value="Malate synthase, domain III"/>
    <property type="match status" value="1"/>
</dbReference>
<dbReference type="HAMAP" id="MF_00641">
    <property type="entry name" value="Malate_synth_G"/>
    <property type="match status" value="1"/>
</dbReference>
<dbReference type="InterPro" id="IPR044856">
    <property type="entry name" value="Malate_synth_C_sf"/>
</dbReference>
<dbReference type="InterPro" id="IPR011076">
    <property type="entry name" value="Malate_synth_sf"/>
</dbReference>
<dbReference type="InterPro" id="IPR001465">
    <property type="entry name" value="Malate_synthase_TIM"/>
</dbReference>
<dbReference type="InterPro" id="IPR006253">
    <property type="entry name" value="Malate_synthG"/>
</dbReference>
<dbReference type="InterPro" id="IPR048355">
    <property type="entry name" value="MS_C"/>
</dbReference>
<dbReference type="InterPro" id="IPR048356">
    <property type="entry name" value="MS_N"/>
</dbReference>
<dbReference type="InterPro" id="IPR046363">
    <property type="entry name" value="MS_N_TIM-barrel_dom"/>
</dbReference>
<dbReference type="InterPro" id="IPR048357">
    <property type="entry name" value="MSG_insertion"/>
</dbReference>
<dbReference type="NCBIfam" id="TIGR01345">
    <property type="entry name" value="malate_syn_G"/>
    <property type="match status" value="1"/>
</dbReference>
<dbReference type="NCBIfam" id="NF002825">
    <property type="entry name" value="PRK02999.1"/>
    <property type="match status" value="1"/>
</dbReference>
<dbReference type="PANTHER" id="PTHR42739">
    <property type="entry name" value="MALATE SYNTHASE G"/>
    <property type="match status" value="1"/>
</dbReference>
<dbReference type="PANTHER" id="PTHR42739:SF1">
    <property type="entry name" value="MALATE SYNTHASE G"/>
    <property type="match status" value="1"/>
</dbReference>
<dbReference type="Pfam" id="PF20659">
    <property type="entry name" value="MS_C"/>
    <property type="match status" value="1"/>
</dbReference>
<dbReference type="Pfam" id="PF20656">
    <property type="entry name" value="MS_N"/>
    <property type="match status" value="1"/>
</dbReference>
<dbReference type="Pfam" id="PF01274">
    <property type="entry name" value="MS_TIM-barrel"/>
    <property type="match status" value="1"/>
</dbReference>
<dbReference type="Pfam" id="PF20658">
    <property type="entry name" value="MSG_insertion"/>
    <property type="match status" value="1"/>
</dbReference>
<dbReference type="SUPFAM" id="SSF51645">
    <property type="entry name" value="Malate synthase G"/>
    <property type="match status" value="1"/>
</dbReference>
<accession>C0ZZZ0</accession>
<proteinExistence type="inferred from homology"/>
<protein>
    <recommendedName>
        <fullName evidence="1">Malate synthase G</fullName>
        <ecNumber evidence="1">2.3.3.9</ecNumber>
    </recommendedName>
</protein>
<gene>
    <name evidence="1" type="primary">glcB</name>
    <name type="ordered locus">RER_32170</name>
</gene>
<sequence>MTERVQVGSLQVAKVLYDFVVEEALPGTGVDAETFWAGADKVITELAPKNRDLLAKRDDLQAQIDQWHRDHAGAPIDAAAYKAFLQEIGYLLPTPAEFSVTTANVDTEITSTAGPQLVVPILNARFALNASNARWGSLYDALYGTNAISEENGAEKGSGYNKVRGDKVIAWAREFLDAAAPLASGSHADSTKYVIDGSELKITLADGTVTTLAQPEKFVGYLGAKDAPTSILLLNNGLHAEIQIDASSPIGSTDAAGVKDVVLESAVTTIMDFEDSVAAVDADDKVVGYRNWLGLNRGDLSEEIKKGAKSFTRTLNGDRKYTAVDGSELSLHGRSLLFVRNVGHLMTNPAILDADGNEVPEGILDALITSTCAVHGLSISDANGPLDNSRTGSIYIVKPKQHGPEEVAFTTELFGRVEQVLGLPENTLKVGIMDEERRTTVNLAACIKEAVDRVVFINTGFLDRTGDEIHTSMEAGAMVRKAEMKKQKWIGAYEDWNVDTGLACGLQGKAQIGKGMWAMTELMADMLEQKIGHPKAGANTAWVPSPTGATLHATHYHRVDVFAVQDSLKGKPRASVDDILTIPLAPSTDWTDAEKKEELDNNCQSILGYVVRWIDAGVGCSKVPDIHDVALMEDRATLRISSQLLANWLRHGIVSESDVVSALERMAPVVDRQNEGDAEYRNMAPDFDSNIAFQAAKELILEGAKQPSGYTEPILHRRRREYKAANA</sequence>
<keyword id="KW-0963">Cytoplasm</keyword>
<keyword id="KW-0329">Glyoxylate bypass</keyword>
<keyword id="KW-0460">Magnesium</keyword>
<keyword id="KW-0479">Metal-binding</keyword>
<keyword id="KW-0558">Oxidation</keyword>
<keyword id="KW-0808">Transferase</keyword>
<keyword id="KW-0816">Tricarboxylic acid cycle</keyword>
<organism>
    <name type="scientific">Rhodococcus erythropolis (strain PR4 / NBRC 100887)</name>
    <dbReference type="NCBI Taxonomy" id="234621"/>
    <lineage>
        <taxon>Bacteria</taxon>
        <taxon>Bacillati</taxon>
        <taxon>Actinomycetota</taxon>
        <taxon>Actinomycetes</taxon>
        <taxon>Mycobacteriales</taxon>
        <taxon>Nocardiaceae</taxon>
        <taxon>Rhodococcus</taxon>
        <taxon>Rhodococcus erythropolis group</taxon>
    </lineage>
</organism>
<name>MASZ_RHOE4</name>
<reference key="1">
    <citation type="submission" date="2005-03" db="EMBL/GenBank/DDBJ databases">
        <title>Comparison of the complete genome sequences of Rhodococcus erythropolis PR4 and Rhodococcus opacus B4.</title>
        <authorList>
            <person name="Takarada H."/>
            <person name="Sekine M."/>
            <person name="Hosoyama A."/>
            <person name="Yamada R."/>
            <person name="Fujisawa T."/>
            <person name="Omata S."/>
            <person name="Shimizu A."/>
            <person name="Tsukatani N."/>
            <person name="Tanikawa S."/>
            <person name="Fujita N."/>
            <person name="Harayama S."/>
        </authorList>
    </citation>
    <scope>NUCLEOTIDE SEQUENCE [LARGE SCALE GENOMIC DNA]</scope>
    <source>
        <strain>PR4 / NBRC 100887</strain>
    </source>
</reference>
<feature type="chain" id="PRO_1000212377" description="Malate synthase G">
    <location>
        <begin position="1"/>
        <end position="727"/>
    </location>
</feature>
<feature type="active site" description="Proton acceptor" evidence="1">
    <location>
        <position position="340"/>
    </location>
</feature>
<feature type="active site" description="Proton donor" evidence="1">
    <location>
        <position position="634"/>
    </location>
</feature>
<feature type="binding site" evidence="1">
    <location>
        <position position="118"/>
    </location>
    <ligand>
        <name>acetyl-CoA</name>
        <dbReference type="ChEBI" id="CHEBI:57288"/>
    </ligand>
</feature>
<feature type="binding site" evidence="1">
    <location>
        <begin position="125"/>
        <end position="126"/>
    </location>
    <ligand>
        <name>acetyl-CoA</name>
        <dbReference type="ChEBI" id="CHEBI:57288"/>
    </ligand>
</feature>
<feature type="binding site" evidence="1">
    <location>
        <position position="276"/>
    </location>
    <ligand>
        <name>acetyl-CoA</name>
        <dbReference type="ChEBI" id="CHEBI:57288"/>
    </ligand>
</feature>
<feature type="binding site" evidence="1">
    <location>
        <position position="313"/>
    </location>
    <ligand>
        <name>acetyl-CoA</name>
        <dbReference type="ChEBI" id="CHEBI:57288"/>
    </ligand>
</feature>
<feature type="binding site" evidence="1">
    <location>
        <position position="340"/>
    </location>
    <ligand>
        <name>glyoxylate</name>
        <dbReference type="ChEBI" id="CHEBI:36655"/>
    </ligand>
</feature>
<feature type="binding site" evidence="1">
    <location>
        <position position="435"/>
    </location>
    <ligand>
        <name>glyoxylate</name>
        <dbReference type="ChEBI" id="CHEBI:36655"/>
    </ligand>
</feature>
<feature type="binding site" evidence="1">
    <location>
        <position position="435"/>
    </location>
    <ligand>
        <name>Mg(2+)</name>
        <dbReference type="ChEBI" id="CHEBI:18420"/>
    </ligand>
</feature>
<feature type="binding site" evidence="1">
    <location>
        <begin position="460"/>
        <end position="463"/>
    </location>
    <ligand>
        <name>glyoxylate</name>
        <dbReference type="ChEBI" id="CHEBI:36655"/>
    </ligand>
</feature>
<feature type="binding site" evidence="1">
    <location>
        <position position="463"/>
    </location>
    <ligand>
        <name>Mg(2+)</name>
        <dbReference type="ChEBI" id="CHEBI:18420"/>
    </ligand>
</feature>
<feature type="binding site" evidence="1">
    <location>
        <position position="544"/>
    </location>
    <ligand>
        <name>acetyl-CoA</name>
        <dbReference type="ChEBI" id="CHEBI:57288"/>
    </ligand>
</feature>
<feature type="modified residue" description="Cysteine sulfenic acid (-SOH)" evidence="1">
    <location>
        <position position="620"/>
    </location>
</feature>